<comment type="function">
    <text evidence="1">Required for the first step of histidine biosynthesis. May allow the feedback regulation of ATP phosphoribosyltransferase activity by histidine.</text>
</comment>
<comment type="pathway">
    <text evidence="1">Amino-acid biosynthesis; L-histidine biosynthesis; L-histidine from 5-phospho-alpha-D-ribose 1-diphosphate: step 1/9.</text>
</comment>
<comment type="subunit">
    <text evidence="1">Heteromultimer composed of HisG and HisZ subunits.</text>
</comment>
<comment type="subcellular location">
    <subcellularLocation>
        <location evidence="1">Cytoplasm</location>
    </subcellularLocation>
</comment>
<comment type="miscellaneous">
    <text>This function is generally fulfilled by the C-terminal part of HisG, which is missing in some bacteria such as this one.</text>
</comment>
<comment type="similarity">
    <text evidence="1">Belongs to the class-II aminoacyl-tRNA synthetase family. HisZ subfamily.</text>
</comment>
<organism>
    <name type="scientific">Brucella abortus biovar 1 (strain 9-941)</name>
    <dbReference type="NCBI Taxonomy" id="262698"/>
    <lineage>
        <taxon>Bacteria</taxon>
        <taxon>Pseudomonadati</taxon>
        <taxon>Pseudomonadota</taxon>
        <taxon>Alphaproteobacteria</taxon>
        <taxon>Hyphomicrobiales</taxon>
        <taxon>Brucellaceae</taxon>
        <taxon>Brucella/Ochrobactrum group</taxon>
        <taxon>Brucella</taxon>
    </lineage>
</organism>
<evidence type="ECO:0000255" key="1">
    <source>
        <dbReference type="HAMAP-Rule" id="MF_00125"/>
    </source>
</evidence>
<reference key="1">
    <citation type="journal article" date="2005" name="J. Bacteriol.">
        <title>Completion of the genome sequence of Brucella abortus and comparison to the highly similar genomes of Brucella melitensis and Brucella suis.</title>
        <authorList>
            <person name="Halling S.M."/>
            <person name="Peterson-Burch B.D."/>
            <person name="Bricker B.J."/>
            <person name="Zuerner R.L."/>
            <person name="Qing Z."/>
            <person name="Li L.-L."/>
            <person name="Kapur V."/>
            <person name="Alt D.P."/>
            <person name="Olsen S.C."/>
        </authorList>
    </citation>
    <scope>NUCLEOTIDE SEQUENCE [LARGE SCALE GENOMIC DNA]</scope>
    <source>
        <strain>9-941</strain>
    </source>
</reference>
<keyword id="KW-0028">Amino-acid biosynthesis</keyword>
<keyword id="KW-0963">Cytoplasm</keyword>
<keyword id="KW-0368">Histidine biosynthesis</keyword>
<sequence>MTMVGSRTSPIFNALRVELNAREAELVEIPLIQPADPFLDMAGEDLRRRIFLTENENGDSLCLRPEFTIPVCRNHIALNAATPKRYAYLGEVFRQRRDGAAEFLQAGIEDLGAADEAASDARSLADALSCVKAIAPDAPLEIVLGDQSVFAGMLKALGLPQGWRKKLLRSFGDAHSMDLALAELTGTQRRDPLPESLAVLVAEGDEIGLARMLEAEMLEAGISPGAGRTPVEIARRLIEKEDLAATHFPAAALDLLRQFLAIRVSLDMAAVTLRAFAADNALDLGAVLQKFEARADAIAQAGIEMKDIIYDASFGRPLDYYTGLVYEIRDASNRQDGVLAGGGRYDRLLTMLGACEAIPGVGFSIWLDRLQALAGEKQ</sequence>
<dbReference type="EMBL" id="AE017224">
    <property type="protein sequence ID" value="AAX75627.1"/>
    <property type="molecule type" value="Genomic_DNA"/>
</dbReference>
<dbReference type="SMR" id="Q579Q7"/>
<dbReference type="EnsemblBacteria" id="AAX75627">
    <property type="protein sequence ID" value="AAX75627"/>
    <property type="gene ID" value="BruAb2_0183"/>
</dbReference>
<dbReference type="KEGG" id="bmb:BruAb2_0183"/>
<dbReference type="HOGENOM" id="CLU_025113_6_0_5"/>
<dbReference type="UniPathway" id="UPA00031">
    <property type="reaction ID" value="UER00006"/>
</dbReference>
<dbReference type="Proteomes" id="UP000000540">
    <property type="component" value="Chromosome II"/>
</dbReference>
<dbReference type="GO" id="GO:0005737">
    <property type="term" value="C:cytoplasm"/>
    <property type="evidence" value="ECO:0007669"/>
    <property type="project" value="UniProtKB-SubCell"/>
</dbReference>
<dbReference type="GO" id="GO:0004821">
    <property type="term" value="F:histidine-tRNA ligase activity"/>
    <property type="evidence" value="ECO:0007669"/>
    <property type="project" value="TreeGrafter"/>
</dbReference>
<dbReference type="GO" id="GO:0006427">
    <property type="term" value="P:histidyl-tRNA aminoacylation"/>
    <property type="evidence" value="ECO:0007669"/>
    <property type="project" value="TreeGrafter"/>
</dbReference>
<dbReference type="GO" id="GO:0000105">
    <property type="term" value="P:L-histidine biosynthetic process"/>
    <property type="evidence" value="ECO:0007669"/>
    <property type="project" value="UniProtKB-UniRule"/>
</dbReference>
<dbReference type="Gene3D" id="3.30.930.10">
    <property type="entry name" value="Bira Bifunctional Protein, Domain 2"/>
    <property type="match status" value="1"/>
</dbReference>
<dbReference type="HAMAP" id="MF_00125">
    <property type="entry name" value="HisZ"/>
    <property type="match status" value="1"/>
</dbReference>
<dbReference type="InterPro" id="IPR045864">
    <property type="entry name" value="aa-tRNA-synth_II/BPL/LPL"/>
</dbReference>
<dbReference type="InterPro" id="IPR041715">
    <property type="entry name" value="HisRS-like_core"/>
</dbReference>
<dbReference type="InterPro" id="IPR004516">
    <property type="entry name" value="HisRS/HisZ"/>
</dbReference>
<dbReference type="InterPro" id="IPR004517">
    <property type="entry name" value="HisZ"/>
</dbReference>
<dbReference type="NCBIfam" id="NF008948">
    <property type="entry name" value="PRK12295.1-1"/>
    <property type="match status" value="1"/>
</dbReference>
<dbReference type="NCBIfam" id="NF008951">
    <property type="entry name" value="PRK12295.1-4"/>
    <property type="match status" value="1"/>
</dbReference>
<dbReference type="PANTHER" id="PTHR43707:SF1">
    <property type="entry name" value="HISTIDINE--TRNA LIGASE, MITOCHONDRIAL-RELATED"/>
    <property type="match status" value="1"/>
</dbReference>
<dbReference type="PANTHER" id="PTHR43707">
    <property type="entry name" value="HISTIDYL-TRNA SYNTHETASE"/>
    <property type="match status" value="1"/>
</dbReference>
<dbReference type="Pfam" id="PF13393">
    <property type="entry name" value="tRNA-synt_His"/>
    <property type="match status" value="2"/>
</dbReference>
<dbReference type="PIRSF" id="PIRSF001549">
    <property type="entry name" value="His-tRNA_synth"/>
    <property type="match status" value="1"/>
</dbReference>
<dbReference type="SUPFAM" id="SSF55681">
    <property type="entry name" value="Class II aaRS and biotin synthetases"/>
    <property type="match status" value="1"/>
</dbReference>
<gene>
    <name evidence="1" type="primary">hisZ</name>
    <name type="ordered locus">BruAb2_0183</name>
</gene>
<accession>Q579Q7</accession>
<name>HISZ_BRUAB</name>
<proteinExistence type="inferred from homology"/>
<feature type="chain" id="PRO_0000242824" description="ATP phosphoribosyltransferase regulatory subunit">
    <location>
        <begin position="1"/>
        <end position="378"/>
    </location>
</feature>
<protein>
    <recommendedName>
        <fullName evidence="1">ATP phosphoribosyltransferase regulatory subunit</fullName>
    </recommendedName>
</protein>